<comment type="function">
    <text evidence="1">Catalyzes the base-exchange of a guanine (G) residue with the queuine precursor 7-aminomethyl-7-deazaguanine (PreQ1) at position 34 (anticodon wobble position) in tRNAs with GU(N) anticodons (tRNA-Asp, -Asn, -His and -Tyr). Catalysis occurs through a double-displacement mechanism. The nucleophile active site attacks the C1' of nucleotide 34 to detach the guanine base from the RNA, forming a covalent enzyme-RNA intermediate. The proton acceptor active site deprotonates the incoming PreQ1, allowing a nucleophilic attack on the C1' of the ribose to form the product. After dissociation, two additional enzymatic reactions on the tRNA convert PreQ1 to queuine (Q), resulting in the hypermodified nucleoside queuosine (7-(((4,5-cis-dihydroxy-2-cyclopenten-1-yl)amino)methyl)-7-deazaguanosine).</text>
</comment>
<comment type="catalytic activity">
    <reaction evidence="1">
        <text>7-aminomethyl-7-carbaguanine + guanosine(34) in tRNA = 7-aminomethyl-7-carbaguanosine(34) in tRNA + guanine</text>
        <dbReference type="Rhea" id="RHEA:24104"/>
        <dbReference type="Rhea" id="RHEA-COMP:10341"/>
        <dbReference type="Rhea" id="RHEA-COMP:10342"/>
        <dbReference type="ChEBI" id="CHEBI:16235"/>
        <dbReference type="ChEBI" id="CHEBI:58703"/>
        <dbReference type="ChEBI" id="CHEBI:74269"/>
        <dbReference type="ChEBI" id="CHEBI:82833"/>
        <dbReference type="EC" id="2.4.2.29"/>
    </reaction>
</comment>
<comment type="cofactor">
    <cofactor evidence="1">
        <name>Zn(2+)</name>
        <dbReference type="ChEBI" id="CHEBI:29105"/>
    </cofactor>
    <text evidence="1">Binds 1 zinc ion per subunit.</text>
</comment>
<comment type="pathway">
    <text evidence="1">tRNA modification; tRNA-queuosine biosynthesis.</text>
</comment>
<comment type="subunit">
    <text evidence="1">Homodimer. Within each dimer, one monomer is responsible for RNA recognition and catalysis, while the other monomer binds to the replacement base PreQ1.</text>
</comment>
<comment type="similarity">
    <text evidence="1">Belongs to the queuine tRNA-ribosyltransferase family.</text>
</comment>
<name>TGT_STRP1</name>
<dbReference type="EC" id="2.4.2.29" evidence="1"/>
<dbReference type="EMBL" id="AE004092">
    <property type="protein sequence ID" value="AAK33298.1"/>
    <property type="molecule type" value="Genomic_DNA"/>
</dbReference>
<dbReference type="EMBL" id="CP000017">
    <property type="protein sequence ID" value="AAZ50794.1"/>
    <property type="molecule type" value="Genomic_DNA"/>
</dbReference>
<dbReference type="RefSeq" id="NP_268577.1">
    <property type="nucleotide sequence ID" value="NC_002737.2"/>
</dbReference>
<dbReference type="SMR" id="Q9A1L6"/>
<dbReference type="PaxDb" id="1314-HKU360_00218"/>
<dbReference type="KEGG" id="spy:SPy_0203"/>
<dbReference type="KEGG" id="spz:M5005_Spy0175"/>
<dbReference type="PATRIC" id="fig|160490.10.peg.179"/>
<dbReference type="HOGENOM" id="CLU_022060_0_1_9"/>
<dbReference type="OMA" id="IDLFDCV"/>
<dbReference type="UniPathway" id="UPA00392"/>
<dbReference type="Proteomes" id="UP000000750">
    <property type="component" value="Chromosome"/>
</dbReference>
<dbReference type="GO" id="GO:0005829">
    <property type="term" value="C:cytosol"/>
    <property type="evidence" value="ECO:0007669"/>
    <property type="project" value="TreeGrafter"/>
</dbReference>
<dbReference type="GO" id="GO:0046872">
    <property type="term" value="F:metal ion binding"/>
    <property type="evidence" value="ECO:0007669"/>
    <property type="project" value="UniProtKB-KW"/>
</dbReference>
<dbReference type="GO" id="GO:0008479">
    <property type="term" value="F:tRNA-guanosine(34) queuine transglycosylase activity"/>
    <property type="evidence" value="ECO:0007669"/>
    <property type="project" value="UniProtKB-UniRule"/>
</dbReference>
<dbReference type="GO" id="GO:0008616">
    <property type="term" value="P:queuosine biosynthetic process"/>
    <property type="evidence" value="ECO:0007669"/>
    <property type="project" value="UniProtKB-UniRule"/>
</dbReference>
<dbReference type="GO" id="GO:0002099">
    <property type="term" value="P:tRNA wobble guanine modification"/>
    <property type="evidence" value="ECO:0007669"/>
    <property type="project" value="TreeGrafter"/>
</dbReference>
<dbReference type="GO" id="GO:0101030">
    <property type="term" value="P:tRNA-guanine transglycosylation"/>
    <property type="evidence" value="ECO:0007669"/>
    <property type="project" value="InterPro"/>
</dbReference>
<dbReference type="FunFam" id="3.20.20.105:FF:000001">
    <property type="entry name" value="Queuine tRNA-ribosyltransferase"/>
    <property type="match status" value="1"/>
</dbReference>
<dbReference type="Gene3D" id="3.20.20.105">
    <property type="entry name" value="Queuine tRNA-ribosyltransferase-like"/>
    <property type="match status" value="1"/>
</dbReference>
<dbReference type="HAMAP" id="MF_00168">
    <property type="entry name" value="Q_tRNA_Tgt"/>
    <property type="match status" value="1"/>
</dbReference>
<dbReference type="InterPro" id="IPR050076">
    <property type="entry name" value="ArchSynthase1/Queuine_TRR"/>
</dbReference>
<dbReference type="InterPro" id="IPR004803">
    <property type="entry name" value="TGT"/>
</dbReference>
<dbReference type="InterPro" id="IPR036511">
    <property type="entry name" value="TGT-like_sf"/>
</dbReference>
<dbReference type="InterPro" id="IPR002616">
    <property type="entry name" value="tRNA_ribo_trans-like"/>
</dbReference>
<dbReference type="NCBIfam" id="TIGR00430">
    <property type="entry name" value="Q_tRNA_tgt"/>
    <property type="match status" value="1"/>
</dbReference>
<dbReference type="NCBIfam" id="TIGR00449">
    <property type="entry name" value="tgt_general"/>
    <property type="match status" value="1"/>
</dbReference>
<dbReference type="PANTHER" id="PTHR46499">
    <property type="entry name" value="QUEUINE TRNA-RIBOSYLTRANSFERASE"/>
    <property type="match status" value="1"/>
</dbReference>
<dbReference type="PANTHER" id="PTHR46499:SF1">
    <property type="entry name" value="QUEUINE TRNA-RIBOSYLTRANSFERASE"/>
    <property type="match status" value="1"/>
</dbReference>
<dbReference type="Pfam" id="PF01702">
    <property type="entry name" value="TGT"/>
    <property type="match status" value="1"/>
</dbReference>
<dbReference type="SUPFAM" id="SSF51713">
    <property type="entry name" value="tRNA-guanine transglycosylase"/>
    <property type="match status" value="1"/>
</dbReference>
<sequence>MTDYPIKYRLIKAEKHTGARLGEIITPHGTFPTPMFMPVGTQATVKTQSPEELKAIGSGIILSNTYHLWLRPGDELIARSGGLHKFMNWDQPILTDSGGFQVYSLADSRNITEEGVTFKNHLNGSKMFLSPEKAISIQNNLGSDIMMSFDECPQFYQPYDYVKKSIERTSRWAERGLKAHRRPHDQGLFGIVQGAGFEDLRRQSAADLVAMDFPGYSIGGLAVGESHEEMNAVLDFTTPLLPENKPRYLMGVGAPDSLIDGVIRGVDMFDCVLPTRIARNGTCMTSEGRLVIKNAKFAEDFTPLDHDCDCYTCQNYSRAYIRHLLKADETFGIRLTSYHNLYFLVNLMKKVRQAIMDDNLLEFRQDFLERYGYNKSNRNF</sequence>
<proteinExistence type="inferred from homology"/>
<accession>Q9A1L6</accession>
<accession>Q491C4</accession>
<feature type="chain" id="PRO_0000135535" description="Queuine tRNA-ribosyltransferase">
    <location>
        <begin position="1"/>
        <end position="380"/>
    </location>
</feature>
<feature type="region of interest" description="RNA binding" evidence="1">
    <location>
        <begin position="251"/>
        <end position="257"/>
    </location>
</feature>
<feature type="region of interest" description="RNA binding; important for wobble base 34 recognition" evidence="1">
    <location>
        <begin position="275"/>
        <end position="279"/>
    </location>
</feature>
<feature type="active site" description="Proton acceptor" evidence="1">
    <location>
        <position position="96"/>
    </location>
</feature>
<feature type="active site" description="Nucleophile" evidence="1">
    <location>
        <position position="270"/>
    </location>
</feature>
<feature type="binding site" evidence="1">
    <location>
        <begin position="96"/>
        <end position="100"/>
    </location>
    <ligand>
        <name>substrate</name>
    </ligand>
</feature>
<feature type="binding site" evidence="1">
    <location>
        <position position="150"/>
    </location>
    <ligand>
        <name>substrate</name>
    </ligand>
</feature>
<feature type="binding site" evidence="1">
    <location>
        <position position="193"/>
    </location>
    <ligand>
        <name>substrate</name>
    </ligand>
</feature>
<feature type="binding site" evidence="1">
    <location>
        <position position="220"/>
    </location>
    <ligand>
        <name>substrate</name>
    </ligand>
</feature>
<feature type="binding site" evidence="1">
    <location>
        <position position="308"/>
    </location>
    <ligand>
        <name>Zn(2+)</name>
        <dbReference type="ChEBI" id="CHEBI:29105"/>
    </ligand>
</feature>
<feature type="binding site" evidence="1">
    <location>
        <position position="310"/>
    </location>
    <ligand>
        <name>Zn(2+)</name>
        <dbReference type="ChEBI" id="CHEBI:29105"/>
    </ligand>
</feature>
<feature type="binding site" evidence="1">
    <location>
        <position position="313"/>
    </location>
    <ligand>
        <name>Zn(2+)</name>
        <dbReference type="ChEBI" id="CHEBI:29105"/>
    </ligand>
</feature>
<feature type="binding site" evidence="1">
    <location>
        <position position="339"/>
    </location>
    <ligand>
        <name>Zn(2+)</name>
        <dbReference type="ChEBI" id="CHEBI:29105"/>
    </ligand>
</feature>
<reference key="1">
    <citation type="journal article" date="2001" name="Proc. Natl. Acad. Sci. U.S.A.">
        <title>Complete genome sequence of an M1 strain of Streptococcus pyogenes.</title>
        <authorList>
            <person name="Ferretti J.J."/>
            <person name="McShan W.M."/>
            <person name="Ajdic D.J."/>
            <person name="Savic D.J."/>
            <person name="Savic G."/>
            <person name="Lyon K."/>
            <person name="Primeaux C."/>
            <person name="Sezate S."/>
            <person name="Suvorov A.N."/>
            <person name="Kenton S."/>
            <person name="Lai H.S."/>
            <person name="Lin S.P."/>
            <person name="Qian Y."/>
            <person name="Jia H.G."/>
            <person name="Najar F.Z."/>
            <person name="Ren Q."/>
            <person name="Zhu H."/>
            <person name="Song L."/>
            <person name="White J."/>
            <person name="Yuan X."/>
            <person name="Clifton S.W."/>
            <person name="Roe B.A."/>
            <person name="McLaughlin R.E."/>
        </authorList>
    </citation>
    <scope>NUCLEOTIDE SEQUENCE [LARGE SCALE GENOMIC DNA]</scope>
    <source>
        <strain>ATCC 700294 / SF370 / Serotype M1</strain>
    </source>
</reference>
<reference key="2">
    <citation type="journal article" date="2005" name="J. Infect. Dis.">
        <title>Evolutionary origin and emergence of a highly successful clone of serotype M1 group A Streptococcus involved multiple horizontal gene transfer events.</title>
        <authorList>
            <person name="Sumby P."/>
            <person name="Porcella S.F."/>
            <person name="Madrigal A.G."/>
            <person name="Barbian K.D."/>
            <person name="Virtaneva K."/>
            <person name="Ricklefs S.M."/>
            <person name="Sturdevant D.E."/>
            <person name="Graham M.R."/>
            <person name="Vuopio-Varkila J."/>
            <person name="Hoe N.P."/>
            <person name="Musser J.M."/>
        </authorList>
    </citation>
    <scope>NUCLEOTIDE SEQUENCE [LARGE SCALE GENOMIC DNA]</scope>
    <source>
        <strain>ATCC BAA-947 / MGAS5005 / Serotype M1</strain>
    </source>
</reference>
<protein>
    <recommendedName>
        <fullName evidence="1">Queuine tRNA-ribosyltransferase</fullName>
        <ecNumber evidence="1">2.4.2.29</ecNumber>
    </recommendedName>
    <alternativeName>
        <fullName evidence="1">Guanine insertion enzyme</fullName>
    </alternativeName>
    <alternativeName>
        <fullName evidence="1">tRNA-guanine transglycosylase</fullName>
    </alternativeName>
</protein>
<organism>
    <name type="scientific">Streptococcus pyogenes serotype M1</name>
    <dbReference type="NCBI Taxonomy" id="301447"/>
    <lineage>
        <taxon>Bacteria</taxon>
        <taxon>Bacillati</taxon>
        <taxon>Bacillota</taxon>
        <taxon>Bacilli</taxon>
        <taxon>Lactobacillales</taxon>
        <taxon>Streptococcaceae</taxon>
        <taxon>Streptococcus</taxon>
    </lineage>
</organism>
<evidence type="ECO:0000255" key="1">
    <source>
        <dbReference type="HAMAP-Rule" id="MF_00168"/>
    </source>
</evidence>
<gene>
    <name evidence="1" type="primary">tgt</name>
    <name type="ordered locus">SPy_0203</name>
    <name type="ordered locus">M5005_Spy0175</name>
</gene>
<keyword id="KW-0328">Glycosyltransferase</keyword>
<keyword id="KW-0479">Metal-binding</keyword>
<keyword id="KW-0671">Queuosine biosynthesis</keyword>
<keyword id="KW-1185">Reference proteome</keyword>
<keyword id="KW-0808">Transferase</keyword>
<keyword id="KW-0819">tRNA processing</keyword>
<keyword id="KW-0862">Zinc</keyword>